<comment type="similarity">
    <text evidence="1">Belongs to the UPF0102 family.</text>
</comment>
<dbReference type="EMBL" id="CP001029">
    <property type="protein sequence ID" value="ACB78652.1"/>
    <property type="molecule type" value="Genomic_DNA"/>
</dbReference>
<dbReference type="RefSeq" id="WP_012452410.1">
    <property type="nucleotide sequence ID" value="NC_010725.1"/>
</dbReference>
<dbReference type="SMR" id="B1ZJ78"/>
<dbReference type="STRING" id="441620.Mpop_0474"/>
<dbReference type="KEGG" id="mpo:Mpop_0474"/>
<dbReference type="eggNOG" id="COG0792">
    <property type="taxonomic scope" value="Bacteria"/>
</dbReference>
<dbReference type="HOGENOM" id="CLU_115353_0_2_5"/>
<dbReference type="OrthoDB" id="9812968at2"/>
<dbReference type="Proteomes" id="UP000007136">
    <property type="component" value="Chromosome"/>
</dbReference>
<dbReference type="GO" id="GO:0003676">
    <property type="term" value="F:nucleic acid binding"/>
    <property type="evidence" value="ECO:0007669"/>
    <property type="project" value="InterPro"/>
</dbReference>
<dbReference type="Gene3D" id="3.40.1350.10">
    <property type="match status" value="1"/>
</dbReference>
<dbReference type="HAMAP" id="MF_00048">
    <property type="entry name" value="UPF0102"/>
    <property type="match status" value="1"/>
</dbReference>
<dbReference type="InterPro" id="IPR011335">
    <property type="entry name" value="Restrct_endonuc-II-like"/>
</dbReference>
<dbReference type="InterPro" id="IPR011856">
    <property type="entry name" value="tRNA_endonuc-like_dom_sf"/>
</dbReference>
<dbReference type="InterPro" id="IPR003509">
    <property type="entry name" value="UPF0102_YraN-like"/>
</dbReference>
<dbReference type="NCBIfam" id="NF009151">
    <property type="entry name" value="PRK12497.1-5"/>
    <property type="match status" value="1"/>
</dbReference>
<dbReference type="NCBIfam" id="NF011272">
    <property type="entry name" value="PRK14679.1"/>
    <property type="match status" value="1"/>
</dbReference>
<dbReference type="PANTHER" id="PTHR34039">
    <property type="entry name" value="UPF0102 PROTEIN YRAN"/>
    <property type="match status" value="1"/>
</dbReference>
<dbReference type="PANTHER" id="PTHR34039:SF1">
    <property type="entry name" value="UPF0102 PROTEIN YRAN"/>
    <property type="match status" value="1"/>
</dbReference>
<dbReference type="Pfam" id="PF02021">
    <property type="entry name" value="UPF0102"/>
    <property type="match status" value="1"/>
</dbReference>
<dbReference type="SUPFAM" id="SSF52980">
    <property type="entry name" value="Restriction endonuclease-like"/>
    <property type="match status" value="1"/>
</dbReference>
<accession>B1ZJ78</accession>
<gene>
    <name type="ordered locus">Mpop_0474</name>
</gene>
<sequence length="125" mass="13860">MRPPPDPQARRRATHGRGLSAEALALLALMLKGYRPLARRFAASGGEIDLIVRRGRTIAFVEVKARATLEAAAIAIDGRKRARMSRAARAWLARHRLPADAILRADAVFVAPRRWPLHLPNAFEI</sequence>
<organism>
    <name type="scientific">Methylorubrum populi (strain ATCC BAA-705 / NCIMB 13946 / BJ001)</name>
    <name type="common">Methylobacterium populi</name>
    <dbReference type="NCBI Taxonomy" id="441620"/>
    <lineage>
        <taxon>Bacteria</taxon>
        <taxon>Pseudomonadati</taxon>
        <taxon>Pseudomonadota</taxon>
        <taxon>Alphaproteobacteria</taxon>
        <taxon>Hyphomicrobiales</taxon>
        <taxon>Methylobacteriaceae</taxon>
        <taxon>Methylorubrum</taxon>
    </lineage>
</organism>
<feature type="chain" id="PRO_1000200151" description="UPF0102 protein Mpop_0474">
    <location>
        <begin position="1"/>
        <end position="125"/>
    </location>
</feature>
<name>Y474_METPB</name>
<evidence type="ECO:0000255" key="1">
    <source>
        <dbReference type="HAMAP-Rule" id="MF_00048"/>
    </source>
</evidence>
<proteinExistence type="inferred from homology"/>
<reference key="1">
    <citation type="submission" date="2008-04" db="EMBL/GenBank/DDBJ databases">
        <title>Complete sequence of chromosome of Methylobacterium populi BJ001.</title>
        <authorList>
            <consortium name="US DOE Joint Genome Institute"/>
            <person name="Copeland A."/>
            <person name="Lucas S."/>
            <person name="Lapidus A."/>
            <person name="Glavina del Rio T."/>
            <person name="Dalin E."/>
            <person name="Tice H."/>
            <person name="Bruce D."/>
            <person name="Goodwin L."/>
            <person name="Pitluck S."/>
            <person name="Chertkov O."/>
            <person name="Brettin T."/>
            <person name="Detter J.C."/>
            <person name="Han C."/>
            <person name="Kuske C.R."/>
            <person name="Schmutz J."/>
            <person name="Larimer F."/>
            <person name="Land M."/>
            <person name="Hauser L."/>
            <person name="Kyrpides N."/>
            <person name="Mikhailova N."/>
            <person name="Marx C."/>
            <person name="Richardson P."/>
        </authorList>
    </citation>
    <scope>NUCLEOTIDE SEQUENCE [LARGE SCALE GENOMIC DNA]</scope>
    <source>
        <strain>ATCC BAA-705 / NCIMB 13946 / BJ001</strain>
    </source>
</reference>
<protein>
    <recommendedName>
        <fullName evidence="1">UPF0102 protein Mpop_0474</fullName>
    </recommendedName>
</protein>